<accession>Q04777</accession>
<evidence type="ECO:0000305" key="1"/>
<evidence type="ECO:0007829" key="2">
    <source>
        <dbReference type="PDB" id="5XNE"/>
    </source>
</evidence>
<organism>
    <name type="scientific">Bacillus subtilis (strain 168)</name>
    <dbReference type="NCBI Taxonomy" id="224308"/>
    <lineage>
        <taxon>Bacteria</taxon>
        <taxon>Bacillati</taxon>
        <taxon>Bacillota</taxon>
        <taxon>Bacilli</taxon>
        <taxon>Bacillales</taxon>
        <taxon>Bacillaceae</taxon>
        <taxon>Bacillus</taxon>
    </lineage>
</organism>
<comment type="function">
    <text>Converts acetolactate into acetoin, which can be excreted by the cells. This may be a mechanism for controlling the internal pH of cells in the stationary stage.</text>
</comment>
<comment type="catalytic activity">
    <reaction>
        <text>(2S)-2-acetolactate + H(+) = (R)-acetoin + CO2</text>
        <dbReference type="Rhea" id="RHEA:21580"/>
        <dbReference type="ChEBI" id="CHEBI:15378"/>
        <dbReference type="ChEBI" id="CHEBI:15686"/>
        <dbReference type="ChEBI" id="CHEBI:16526"/>
        <dbReference type="ChEBI" id="CHEBI:58476"/>
        <dbReference type="EC" id="4.1.1.5"/>
    </reaction>
</comment>
<comment type="pathway">
    <text>Polyol metabolism; (R,R)-butane-2,3-diol biosynthesis; (R,R)-butane-2,3-diol from pyruvate: step 2/3.</text>
</comment>
<comment type="induction">
    <text>Strongly induced under anaerobic conditions. Activated by ResDE, Fnr and ArfM.</text>
</comment>
<comment type="similarity">
    <text evidence="1">Belongs to the alpha-acetolactate decarboxylase family.</text>
</comment>
<dbReference type="EC" id="4.1.1.5"/>
<dbReference type="EMBL" id="L04470">
    <property type="protein sequence ID" value="AAA22223.1"/>
    <property type="molecule type" value="Genomic_DNA"/>
</dbReference>
<dbReference type="EMBL" id="Z93767">
    <property type="protein sequence ID" value="CAB07786.1"/>
    <property type="molecule type" value="Genomic_DNA"/>
</dbReference>
<dbReference type="EMBL" id="AL009126">
    <property type="protein sequence ID" value="CAB15617.1"/>
    <property type="molecule type" value="Genomic_DNA"/>
</dbReference>
<dbReference type="PIR" id="B47126">
    <property type="entry name" value="B47126"/>
</dbReference>
<dbReference type="RefSeq" id="NP_391481.1">
    <property type="nucleotide sequence ID" value="NC_000964.3"/>
</dbReference>
<dbReference type="PDB" id="5XNE">
    <property type="method" value="X-ray"/>
    <property type="resolution" value="1.50 A"/>
    <property type="chains" value="A/B=19-253"/>
</dbReference>
<dbReference type="PDBsum" id="5XNE"/>
<dbReference type="SMR" id="Q04777"/>
<dbReference type="FunCoup" id="Q04777">
    <property type="interactions" value="29"/>
</dbReference>
<dbReference type="STRING" id="224308.BSU36000"/>
<dbReference type="PaxDb" id="224308-BSU36000"/>
<dbReference type="EnsemblBacteria" id="CAB15617">
    <property type="protein sequence ID" value="CAB15617"/>
    <property type="gene ID" value="BSU_36000"/>
</dbReference>
<dbReference type="GeneID" id="936857"/>
<dbReference type="KEGG" id="bsu:BSU36000"/>
<dbReference type="PATRIC" id="fig|224308.179.peg.3897"/>
<dbReference type="eggNOG" id="COG3527">
    <property type="taxonomic scope" value="Bacteria"/>
</dbReference>
<dbReference type="InParanoid" id="Q04777"/>
<dbReference type="OrthoDB" id="8612680at2"/>
<dbReference type="PhylomeDB" id="Q04777"/>
<dbReference type="BioCyc" id="BSUB:BSU36000-MONOMER"/>
<dbReference type="BRENDA" id="4.1.1.5">
    <property type="organism ID" value="658"/>
</dbReference>
<dbReference type="UniPathway" id="UPA00626">
    <property type="reaction ID" value="UER00678"/>
</dbReference>
<dbReference type="Proteomes" id="UP000001570">
    <property type="component" value="Chromosome"/>
</dbReference>
<dbReference type="GO" id="GO:0047605">
    <property type="term" value="F:acetolactate decarboxylase activity"/>
    <property type="evidence" value="ECO:0007669"/>
    <property type="project" value="UniProtKB-EC"/>
</dbReference>
<dbReference type="GO" id="GO:0045151">
    <property type="term" value="P:acetoin biosynthetic process"/>
    <property type="evidence" value="ECO:0007669"/>
    <property type="project" value="UniProtKB-KW"/>
</dbReference>
<dbReference type="CDD" id="cd17299">
    <property type="entry name" value="acetolactate_decarboxylase"/>
    <property type="match status" value="1"/>
</dbReference>
<dbReference type="Gene3D" id="3.30.1330.80">
    <property type="entry name" value="Hypothetical protein, similar to alpha- acetolactate decarboxylase, domain 2"/>
    <property type="match status" value="2"/>
</dbReference>
<dbReference type="InterPro" id="IPR005128">
    <property type="entry name" value="Acetolactate_a_deCO2ase"/>
</dbReference>
<dbReference type="NCBIfam" id="TIGR01252">
    <property type="entry name" value="acetolac_decarb"/>
    <property type="match status" value="1"/>
</dbReference>
<dbReference type="PANTHER" id="PTHR35524">
    <property type="entry name" value="ALPHA-ACETOLACTATE DECARBOXYLASE"/>
    <property type="match status" value="1"/>
</dbReference>
<dbReference type="PANTHER" id="PTHR35524:SF1">
    <property type="entry name" value="ALPHA-ACETOLACTATE DECARBOXYLASE"/>
    <property type="match status" value="1"/>
</dbReference>
<dbReference type="Pfam" id="PF03306">
    <property type="entry name" value="AAL_decarboxy"/>
    <property type="match status" value="1"/>
</dbReference>
<dbReference type="PIRSF" id="PIRSF001332">
    <property type="entry name" value="Acetolac_decarb"/>
    <property type="match status" value="1"/>
</dbReference>
<dbReference type="SUPFAM" id="SSF117856">
    <property type="entry name" value="AF0104/ALDC/Ptd012-like"/>
    <property type="match status" value="1"/>
</dbReference>
<reference key="1">
    <citation type="journal article" date="1993" name="J. Bacteriol.">
        <title>Regulation of the Bacillus subtilis alsS, alsD, and alsR genes involved in post-exponential-phase production of acetoin.</title>
        <authorList>
            <person name="Renna M.C."/>
            <person name="Najimudin N."/>
            <person name="Winik L.R."/>
            <person name="Zahler S.A."/>
        </authorList>
    </citation>
    <scope>NUCLEOTIDE SEQUENCE [GENOMIC DNA]</scope>
</reference>
<reference key="2">
    <citation type="journal article" date="1997" name="Microbiology">
        <title>The Bacillus subtilis genome from gerBC (311 degrees) to licR (334 degrees).</title>
        <authorList>
            <person name="Presecan E."/>
            <person name="Moszer I."/>
            <person name="Boursier L."/>
            <person name="Cruz Ramos H."/>
            <person name="De La Fuente V."/>
            <person name="Hullo M.-F."/>
            <person name="Lelong C."/>
            <person name="Schleich S."/>
            <person name="Sekowska A."/>
            <person name="Song B.H."/>
            <person name="Villani G."/>
            <person name="Kunst F."/>
            <person name="Danchin A."/>
            <person name="Glaser P."/>
        </authorList>
    </citation>
    <scope>NUCLEOTIDE SEQUENCE [GENOMIC DNA]</scope>
    <source>
        <strain>168</strain>
    </source>
</reference>
<reference key="3">
    <citation type="journal article" date="1997" name="Nature">
        <title>The complete genome sequence of the Gram-positive bacterium Bacillus subtilis.</title>
        <authorList>
            <person name="Kunst F."/>
            <person name="Ogasawara N."/>
            <person name="Moszer I."/>
            <person name="Albertini A.M."/>
            <person name="Alloni G."/>
            <person name="Azevedo V."/>
            <person name="Bertero M.G."/>
            <person name="Bessieres P."/>
            <person name="Bolotin A."/>
            <person name="Borchert S."/>
            <person name="Borriss R."/>
            <person name="Boursier L."/>
            <person name="Brans A."/>
            <person name="Braun M."/>
            <person name="Brignell S.C."/>
            <person name="Bron S."/>
            <person name="Brouillet S."/>
            <person name="Bruschi C.V."/>
            <person name="Caldwell B."/>
            <person name="Capuano V."/>
            <person name="Carter N.M."/>
            <person name="Choi S.-K."/>
            <person name="Codani J.-J."/>
            <person name="Connerton I.F."/>
            <person name="Cummings N.J."/>
            <person name="Daniel R.A."/>
            <person name="Denizot F."/>
            <person name="Devine K.M."/>
            <person name="Duesterhoeft A."/>
            <person name="Ehrlich S.D."/>
            <person name="Emmerson P.T."/>
            <person name="Entian K.-D."/>
            <person name="Errington J."/>
            <person name="Fabret C."/>
            <person name="Ferrari E."/>
            <person name="Foulger D."/>
            <person name="Fritz C."/>
            <person name="Fujita M."/>
            <person name="Fujita Y."/>
            <person name="Fuma S."/>
            <person name="Galizzi A."/>
            <person name="Galleron N."/>
            <person name="Ghim S.-Y."/>
            <person name="Glaser P."/>
            <person name="Goffeau A."/>
            <person name="Golightly E.J."/>
            <person name="Grandi G."/>
            <person name="Guiseppi G."/>
            <person name="Guy B.J."/>
            <person name="Haga K."/>
            <person name="Haiech J."/>
            <person name="Harwood C.R."/>
            <person name="Henaut A."/>
            <person name="Hilbert H."/>
            <person name="Holsappel S."/>
            <person name="Hosono S."/>
            <person name="Hullo M.-F."/>
            <person name="Itaya M."/>
            <person name="Jones L.-M."/>
            <person name="Joris B."/>
            <person name="Karamata D."/>
            <person name="Kasahara Y."/>
            <person name="Klaerr-Blanchard M."/>
            <person name="Klein C."/>
            <person name="Kobayashi Y."/>
            <person name="Koetter P."/>
            <person name="Koningstein G."/>
            <person name="Krogh S."/>
            <person name="Kumano M."/>
            <person name="Kurita K."/>
            <person name="Lapidus A."/>
            <person name="Lardinois S."/>
            <person name="Lauber J."/>
            <person name="Lazarevic V."/>
            <person name="Lee S.-M."/>
            <person name="Levine A."/>
            <person name="Liu H."/>
            <person name="Masuda S."/>
            <person name="Mauel C."/>
            <person name="Medigue C."/>
            <person name="Medina N."/>
            <person name="Mellado R.P."/>
            <person name="Mizuno M."/>
            <person name="Moestl D."/>
            <person name="Nakai S."/>
            <person name="Noback M."/>
            <person name="Noone D."/>
            <person name="O'Reilly M."/>
            <person name="Ogawa K."/>
            <person name="Ogiwara A."/>
            <person name="Oudega B."/>
            <person name="Park S.-H."/>
            <person name="Parro V."/>
            <person name="Pohl T.M."/>
            <person name="Portetelle D."/>
            <person name="Porwollik S."/>
            <person name="Prescott A.M."/>
            <person name="Presecan E."/>
            <person name="Pujic P."/>
            <person name="Purnelle B."/>
            <person name="Rapoport G."/>
            <person name="Rey M."/>
            <person name="Reynolds S."/>
            <person name="Rieger M."/>
            <person name="Rivolta C."/>
            <person name="Rocha E."/>
            <person name="Roche B."/>
            <person name="Rose M."/>
            <person name="Sadaie Y."/>
            <person name="Sato T."/>
            <person name="Scanlan E."/>
            <person name="Schleich S."/>
            <person name="Schroeter R."/>
            <person name="Scoffone F."/>
            <person name="Sekiguchi J."/>
            <person name="Sekowska A."/>
            <person name="Seror S.J."/>
            <person name="Serror P."/>
            <person name="Shin B.-S."/>
            <person name="Soldo B."/>
            <person name="Sorokin A."/>
            <person name="Tacconi E."/>
            <person name="Takagi T."/>
            <person name="Takahashi H."/>
            <person name="Takemaru K."/>
            <person name="Takeuchi M."/>
            <person name="Tamakoshi A."/>
            <person name="Tanaka T."/>
            <person name="Terpstra P."/>
            <person name="Tognoni A."/>
            <person name="Tosato V."/>
            <person name="Uchiyama S."/>
            <person name="Vandenbol M."/>
            <person name="Vannier F."/>
            <person name="Vassarotti A."/>
            <person name="Viari A."/>
            <person name="Wambutt R."/>
            <person name="Wedler E."/>
            <person name="Wedler H."/>
            <person name="Weitzenegger T."/>
            <person name="Winters P."/>
            <person name="Wipat A."/>
            <person name="Yamamoto H."/>
            <person name="Yamane K."/>
            <person name="Yasumoto K."/>
            <person name="Yata K."/>
            <person name="Yoshida K."/>
            <person name="Yoshikawa H.-F."/>
            <person name="Zumstein E."/>
            <person name="Yoshikawa H."/>
            <person name="Danchin A."/>
        </authorList>
    </citation>
    <scope>NUCLEOTIDE SEQUENCE [LARGE SCALE GENOMIC DNA]</scope>
    <source>
        <strain>168</strain>
    </source>
</reference>
<reference key="4">
    <citation type="journal article" date="2000" name="J. Bacteriol.">
        <title>Fermentative metabolism of Bacillus subtilis: physiology and regulation of gene expression.</title>
        <authorList>
            <person name="Cruz Ramos H."/>
            <person name="Hoffmann T."/>
            <person name="Marino M."/>
            <person name="Nedjari H."/>
            <person name="Presecan-Siedel E."/>
            <person name="Dreesen O."/>
            <person name="Glaser P."/>
            <person name="Jahn D."/>
        </authorList>
    </citation>
    <scope>REGULATION</scope>
</reference>
<name>ALDC_BACSU</name>
<feature type="chain" id="PRO_0000218438" description="Alpha-acetolactate decarboxylase">
    <location>
        <begin position="1"/>
        <end position="255"/>
    </location>
</feature>
<feature type="strand" evidence="2">
    <location>
        <begin position="21"/>
        <end position="26"/>
    </location>
</feature>
<feature type="helix" evidence="2">
    <location>
        <begin position="28"/>
        <end position="32"/>
    </location>
</feature>
<feature type="helix" evidence="2">
    <location>
        <begin position="42"/>
        <end position="44"/>
    </location>
</feature>
<feature type="helix" evidence="2">
    <location>
        <begin position="45"/>
        <end position="48"/>
    </location>
</feature>
<feature type="strand" evidence="2">
    <location>
        <begin position="50"/>
        <end position="55"/>
    </location>
</feature>
<feature type="helix" evidence="2">
    <location>
        <begin position="57"/>
        <end position="59"/>
    </location>
</feature>
<feature type="strand" evidence="2">
    <location>
        <begin position="61"/>
        <end position="66"/>
    </location>
</feature>
<feature type="strand" evidence="2">
    <location>
        <begin position="69"/>
        <end position="74"/>
    </location>
</feature>
<feature type="turn" evidence="2">
    <location>
        <begin position="75"/>
        <end position="77"/>
    </location>
</feature>
<feature type="strand" evidence="2">
    <location>
        <begin position="78"/>
        <end position="81"/>
    </location>
</feature>
<feature type="strand" evidence="2">
    <location>
        <begin position="87"/>
        <end position="94"/>
    </location>
</feature>
<feature type="strand" evidence="2">
    <location>
        <begin position="100"/>
        <end position="104"/>
    </location>
</feature>
<feature type="helix" evidence="2">
    <location>
        <begin position="110"/>
        <end position="118"/>
    </location>
</feature>
<feature type="strand" evidence="2">
    <location>
        <begin position="126"/>
        <end position="142"/>
    </location>
</feature>
<feature type="helix" evidence="2">
    <location>
        <begin position="154"/>
        <end position="157"/>
    </location>
</feature>
<feature type="helix" evidence="2">
    <location>
        <begin position="158"/>
        <end position="160"/>
    </location>
</feature>
<feature type="strand" evidence="2">
    <location>
        <begin position="163"/>
        <end position="178"/>
    </location>
</feature>
<feature type="helix" evidence="2">
    <location>
        <begin position="180"/>
        <end position="182"/>
    </location>
</feature>
<feature type="strand" evidence="2">
    <location>
        <begin position="188"/>
        <end position="196"/>
    </location>
</feature>
<feature type="strand" evidence="2">
    <location>
        <begin position="202"/>
        <end position="226"/>
    </location>
</feature>
<feature type="helix" evidence="2">
    <location>
        <begin position="231"/>
        <end position="235"/>
    </location>
</feature>
<feature type="helix" evidence="2">
    <location>
        <begin position="243"/>
        <end position="251"/>
    </location>
</feature>
<sequence length="255" mass="28799">MKRESNIQVLSRGQKDQPVSQIYQVSTMTSLLDGVYDGDFELSEIPKYGDFGIGTFNKLDGELIGFDGEFYRLRSDGTATPVQNGDRSPFCSFTFFTPDMTHKIDAKMTREDFEKEINSMLPSRNLFYAIRIDGLFKKVQTRTVELQEKPYVPMVEAVKTQPIFNFDNVRGTIVGFLTPAYANGIAVSGYHLHFIDEGRNSGGHVFDYVLEDCTVTISQKMNMNLRLPNTADFFNANLDNPDFAKDIETTEGSPE</sequence>
<gene>
    <name type="primary">alsD</name>
    <name type="ordered locus">BSU36000</name>
</gene>
<protein>
    <recommendedName>
        <fullName>Alpha-acetolactate decarboxylase</fullName>
        <ecNumber>4.1.1.5</ecNumber>
    </recommendedName>
</protein>
<keyword id="KW-0002">3D-structure</keyword>
<keyword id="KW-0005">Acetoin biosynthesis</keyword>
<keyword id="KW-0210">Decarboxylase</keyword>
<keyword id="KW-0456">Lyase</keyword>
<keyword id="KW-1185">Reference proteome</keyword>
<proteinExistence type="evidence at protein level"/>